<sequence>MADIKTGIFAKNVQKRLNRAQEKVLQKLGKADETKDEQFEEYVQNFKRQEAEGTRLQRELRGYLAAIKGMQEASMKLTESLHEVYEPDWYGREDVKMVGEKCDVLWEDFHQKLVDGSLLTLDTYLGQFPDIKNRIAKRSRKLVDYDSARHHLEALQSSKRKDESRISKAEEEFQKAQKVFEEFNVDLQEELPSLWSRRVGFYVNTFKNVSSLEAKFHKEIAVLCHKLYEVMTKLGDQHADKAFTIQGAPSDSGPLRIAKTPSPPEEPSPLPSPTASPNHTLAPASPAPARPRSPSQTRKGPPVPPLPKVTPTKELQQENIISFFEDNFVPEISVTTPSQNEVPEVKKEETLLDLDFDPFKPEVTPAGSAGVTHSPMSQTLPWDLWTTSTDLVQPASGGSFNGFTQPQDTSLFTMQTDQSMICNLAESEQAPPTEPKAEEPLAAVTPAVGLDLGMDTRAEEPVEEAVIIPGADADAAVGTLVSAAEGAPGEEAEAEKATVPAGEGVSLEEAKIGTETTEGAESAQPEAEELEATVPQEKVIPSVVIEPASNHEEEGENEITIGAEPKETTEDAAPPGPTSETPELATEQKPIQDPQPTPSAPAMGAADQLASAREASQELPPGFLYKVETLHDFEAANSDELTLQRGDVVLVVPSDSEADQDAGWLVGVKESDWLQYRDLATYKGLFPENFTRRLD</sequence>
<comment type="function">
    <text>May participate in mechanisms of regulated exocytosis in synapses and certain endocrine cell types. May control the properties of the membrane associated cytoskeleton.</text>
</comment>
<comment type="subunit">
    <text evidence="1 7 9 10">Heterodimer with BIN1 (By similarity). Binds SH3GLB1 (By similarity). Interacts with REPS1 and SGIP1 (PubMed:20946875). Binds AP2A2 (PubMed:12057195). Interacts with AP2B1 (PubMed:16903783). Interacts with DNM1 and SYNJ1 (By similarity).</text>
</comment>
<comment type="interaction">
    <interactant intactId="EBI-7121510">
        <id>P49418</id>
    </interactant>
    <interactant intactId="EBI-10186132">
        <id>Q0P5N6</id>
        <label>ARL16</label>
    </interactant>
    <organismsDiffer>false</organismsDiffer>
    <experiments>7</experiments>
</comment>
<comment type="interaction">
    <interactant intactId="EBI-7121510">
        <id>P49418</id>
    </interactant>
    <interactant intactId="EBI-11954292">
        <id>Q86V38</id>
        <label>ATN1</label>
    </interactant>
    <organismsDiffer>false</organismsDiffer>
    <experiments>3</experiments>
</comment>
<comment type="interaction">
    <interactant intactId="EBI-7121510">
        <id>P49418</id>
    </interactant>
    <interactant intactId="EBI-719094">
        <id>O00499</id>
        <label>BIN1</label>
    </interactant>
    <organismsDiffer>false</organismsDiffer>
    <experiments>5</experiments>
</comment>
<comment type="interaction">
    <interactant intactId="EBI-7121510">
        <id>P49418</id>
    </interactant>
    <interactant intactId="EBI-748597">
        <id>Q05D60</id>
        <label>DEUP1</label>
    </interactant>
    <organismsDiffer>false</organismsDiffer>
    <experiments>3</experiments>
</comment>
<comment type="interaction">
    <interactant intactId="EBI-7121510">
        <id>P49418</id>
    </interactant>
    <interactant intactId="EBI-297353">
        <id>P00533</id>
        <label>EGFR</label>
    </interactant>
    <organismsDiffer>false</organismsDiffer>
    <experiments>2</experiments>
</comment>
<comment type="interaction">
    <interactant intactId="EBI-7121510">
        <id>P49418</id>
    </interactant>
    <interactant intactId="EBI-11959013">
        <id>Q08209-2</id>
        <label>PPP3CA</label>
    </interactant>
    <organismsDiffer>false</organismsDiffer>
    <experiments>3</experiments>
</comment>
<comment type="interaction">
    <interactant intactId="EBI-7121510">
        <id>P49418</id>
    </interactant>
    <interactant intactId="EBI-2827192">
        <id>P48454</id>
        <label>PPP3CC</label>
    </interactant>
    <organismsDiffer>false</organismsDiffer>
    <experiments>3</experiments>
</comment>
<comment type="interaction">
    <interactant intactId="EBI-7121510">
        <id>P49418</id>
    </interactant>
    <interactant intactId="EBI-710997">
        <id>P54274</id>
        <label>TERF1</label>
    </interactant>
    <organismsDiffer>false</organismsDiffer>
    <experiments>2</experiments>
</comment>
<comment type="interaction">
    <interactant intactId="EBI-7121510">
        <id>P49418</id>
    </interactant>
    <interactant intactId="EBI-916140">
        <id>P08081</id>
        <label>Clta</label>
    </interactant>
    <organismsDiffer>true</organismsDiffer>
    <experiments>3</experiments>
</comment>
<comment type="interaction">
    <interactant intactId="EBI-7121510">
        <id>P49418</id>
    </interactant>
    <interactant intactId="EBI-7592718">
        <id>P69682</id>
        <label>Necap1</label>
    </interactant>
    <organismsDiffer>true</organismsDiffer>
    <experiments>3</experiments>
</comment>
<comment type="interaction">
    <interactant intactId="EBI-7121510">
        <id>P49418</id>
    </interactant>
    <interactant intactId="EBI-7592476">
        <id>Q9CR95</id>
        <label>Necap1</label>
    </interactant>
    <organismsDiffer>true</organismsDiffer>
    <experiments>6</experiments>
</comment>
<comment type="interaction">
    <interactant intactId="EBI-7121510">
        <id>P49418</id>
    </interactant>
    <interactant intactId="EBI-7069641">
        <id>P58197</id>
        <label>Tfap2a</label>
    </interactant>
    <organismsDiffer>true</organismsDiffer>
    <experiments>2</experiments>
</comment>
<comment type="subcellular location">
    <subcellularLocation>
        <location>Cytoplasmic vesicle</location>
        <location>Secretory vesicle</location>
        <location>Synaptic vesicle membrane</location>
        <topology>Peripheral membrane protein</topology>
        <orientation>Cytoplasmic side</orientation>
    </subcellularLocation>
    <subcellularLocation>
        <location>Cytoplasm</location>
        <location>Cytoskeleton</location>
    </subcellularLocation>
</comment>
<comment type="alternative products">
    <event type="alternative splicing"/>
    <isoform>
        <id>P49418-1</id>
        <name>1</name>
        <name>128 kDa</name>
        <sequence type="displayed"/>
    </isoform>
    <isoform>
        <id>P49418-2</id>
        <name>2</name>
        <name>108 kDa</name>
        <sequence type="described" ref="VSP_000245"/>
    </isoform>
</comment>
<comment type="tissue specificity">
    <text>Neurons, certain endocrine cell types and spermatocytes.</text>
</comment>
<comment type="miscellaneous">
    <text>Antibodies against AMPH are detected in patients with stiff-man syndrome, a rare disease of the central nervous system characterized by progressive rigidity of the body musculature with superimposed painful spasms.</text>
</comment>
<keyword id="KW-0002">3D-structure</keyword>
<keyword id="KW-0025">Alternative splicing</keyword>
<keyword id="KW-0175">Coiled coil</keyword>
<keyword id="KW-0963">Cytoplasm</keyword>
<keyword id="KW-0968">Cytoplasmic vesicle</keyword>
<keyword id="KW-0206">Cytoskeleton</keyword>
<keyword id="KW-0472">Membrane</keyword>
<keyword id="KW-0597">Phosphoprotein</keyword>
<keyword id="KW-1267">Proteomics identification</keyword>
<keyword id="KW-1185">Reference proteome</keyword>
<keyword id="KW-0728">SH3 domain</keyword>
<keyword id="KW-0770">Synapse</keyword>
<reference key="1">
    <citation type="journal article" date="1994" name="FEBS Lett.">
        <title>Autoimmunity in stiff-man syndrome with breast cancer is targeted to the C-terminal region of human amphiphysin, a protein similar to the yeast proteins, Rvs167 and Rvs161.</title>
        <authorList>
            <person name="David C."/>
            <person name="Solimena M."/>
            <person name="de Camilli P."/>
        </authorList>
    </citation>
    <scope>NUCLEOTIDE SEQUENCE [MRNA] (ISOFORM 1)</scope>
    <source>
        <tissue>Cerebellum</tissue>
    </source>
</reference>
<reference key="2">
    <citation type="journal article" date="1995" name="Hum. Mol. Genet.">
        <title>Primary structure of human amphiphysin, the dominant autoantigen of paraneoplastic stiff-man syndrome, and mapping of its gene (AMPH) to chromosome 7p13-p14.</title>
        <authorList>
            <person name="Yamamoto R."/>
            <person name="Li X."/>
            <person name="Winter S."/>
            <person name="Francke U."/>
            <person name="Kilimann M.W."/>
        </authorList>
    </citation>
    <scope>NUCLEOTIDE SEQUENCE [MRNA] (ISOFORM 1)</scope>
    <source>
        <tissue>Brain</tissue>
    </source>
</reference>
<reference key="3">
    <citation type="journal article" date="1998" name="Mol. Med.">
        <title>Expression of amphiphysin I, an autoantigen of paraneoplastic neurological syndromes, in breast cancer.</title>
        <authorList>
            <person name="Floyd S.R."/>
            <person name="Butler M.H."/>
            <person name="Cremona O."/>
            <person name="David C."/>
            <person name="Freyberg Z."/>
            <person name="Zhang X."/>
            <person name="Solimena M."/>
            <person name="Tokunaga A."/>
            <person name="Ishizu H."/>
            <person name="Tsutsui K."/>
            <person name="De Camilli P.V."/>
        </authorList>
    </citation>
    <scope>NUCLEOTIDE SEQUENCE [MRNA] (ISOFORM 2)</scope>
    <source>
        <tissue>Mammary gland</tissue>
    </source>
</reference>
<reference key="4">
    <citation type="journal article" date="2003" name="Science">
        <title>Human chromosome 7: DNA sequence and biology.</title>
        <authorList>
            <person name="Scherer S.W."/>
            <person name="Cheung J."/>
            <person name="MacDonald J.R."/>
            <person name="Osborne L.R."/>
            <person name="Nakabayashi K."/>
            <person name="Herbrick J.-A."/>
            <person name="Carson A.R."/>
            <person name="Parker-Katiraee L."/>
            <person name="Skaug J."/>
            <person name="Khaja R."/>
            <person name="Zhang J."/>
            <person name="Hudek A.K."/>
            <person name="Li M."/>
            <person name="Haddad M."/>
            <person name="Duggan G.E."/>
            <person name="Fernandez B.A."/>
            <person name="Kanematsu E."/>
            <person name="Gentles S."/>
            <person name="Christopoulos C.C."/>
            <person name="Choufani S."/>
            <person name="Kwasnicka D."/>
            <person name="Zheng X.H."/>
            <person name="Lai Z."/>
            <person name="Nusskern D.R."/>
            <person name="Zhang Q."/>
            <person name="Gu Z."/>
            <person name="Lu F."/>
            <person name="Zeesman S."/>
            <person name="Nowaczyk M.J."/>
            <person name="Teshima I."/>
            <person name="Chitayat D."/>
            <person name="Shuman C."/>
            <person name="Weksberg R."/>
            <person name="Zackai E.H."/>
            <person name="Grebe T.A."/>
            <person name="Cox S.R."/>
            <person name="Kirkpatrick S.J."/>
            <person name="Rahman N."/>
            <person name="Friedman J.M."/>
            <person name="Heng H.H.Q."/>
            <person name="Pelicci P.G."/>
            <person name="Lo-Coco F."/>
            <person name="Belloni E."/>
            <person name="Shaffer L.G."/>
            <person name="Pober B."/>
            <person name="Morton C.C."/>
            <person name="Gusella J.F."/>
            <person name="Bruns G.A.P."/>
            <person name="Korf B.R."/>
            <person name="Quade B.J."/>
            <person name="Ligon A.H."/>
            <person name="Ferguson H."/>
            <person name="Higgins A.W."/>
            <person name="Leach N.T."/>
            <person name="Herrick S.R."/>
            <person name="Lemyre E."/>
            <person name="Farra C.G."/>
            <person name="Kim H.-G."/>
            <person name="Summers A.M."/>
            <person name="Gripp K.W."/>
            <person name="Roberts W."/>
            <person name="Szatmari P."/>
            <person name="Winsor E.J.T."/>
            <person name="Grzeschik K.-H."/>
            <person name="Teebi A."/>
            <person name="Minassian B.A."/>
            <person name="Kere J."/>
            <person name="Armengol L."/>
            <person name="Pujana M.A."/>
            <person name="Estivill X."/>
            <person name="Wilson M.D."/>
            <person name="Koop B.F."/>
            <person name="Tosi S."/>
            <person name="Moore G.E."/>
            <person name="Boright A.P."/>
            <person name="Zlotorynski E."/>
            <person name="Kerem B."/>
            <person name="Kroisel P.M."/>
            <person name="Petek E."/>
            <person name="Oscier D.G."/>
            <person name="Mould S.J."/>
            <person name="Doehner H."/>
            <person name="Doehner K."/>
            <person name="Rommens J.M."/>
            <person name="Vincent J.B."/>
            <person name="Venter J.C."/>
            <person name="Li P.W."/>
            <person name="Mural R.J."/>
            <person name="Adams M.D."/>
            <person name="Tsui L.-C."/>
        </authorList>
    </citation>
    <scope>NUCLEOTIDE SEQUENCE [LARGE SCALE GENOMIC DNA]</scope>
</reference>
<reference key="5">
    <citation type="submission" date="2005-07" db="EMBL/GenBank/DDBJ databases">
        <authorList>
            <person name="Mural R.J."/>
            <person name="Istrail S."/>
            <person name="Sutton G.G."/>
            <person name="Florea L."/>
            <person name="Halpern A.L."/>
            <person name="Mobarry C.M."/>
            <person name="Lippert R."/>
            <person name="Walenz B."/>
            <person name="Shatkay H."/>
            <person name="Dew I."/>
            <person name="Miller J.R."/>
            <person name="Flanigan M.J."/>
            <person name="Edwards N.J."/>
            <person name="Bolanos R."/>
            <person name="Fasulo D."/>
            <person name="Halldorsson B.V."/>
            <person name="Hannenhalli S."/>
            <person name="Turner R."/>
            <person name="Yooseph S."/>
            <person name="Lu F."/>
            <person name="Nusskern D.R."/>
            <person name="Shue B.C."/>
            <person name="Zheng X.H."/>
            <person name="Zhong F."/>
            <person name="Delcher A.L."/>
            <person name="Huson D.H."/>
            <person name="Kravitz S.A."/>
            <person name="Mouchard L."/>
            <person name="Reinert K."/>
            <person name="Remington K.A."/>
            <person name="Clark A.G."/>
            <person name="Waterman M.S."/>
            <person name="Eichler E.E."/>
            <person name="Adams M.D."/>
            <person name="Hunkapiller M.W."/>
            <person name="Myers E.W."/>
            <person name="Venter J.C."/>
        </authorList>
    </citation>
    <scope>NUCLEOTIDE SEQUENCE [LARGE SCALE GENOMIC DNA]</scope>
</reference>
<reference key="6">
    <citation type="journal article" date="2003" name="Nature">
        <title>The DNA sequence of human chromosome 7.</title>
        <authorList>
            <person name="Hillier L.W."/>
            <person name="Fulton R.S."/>
            <person name="Fulton L.A."/>
            <person name="Graves T.A."/>
            <person name="Pepin K.H."/>
            <person name="Wagner-McPherson C."/>
            <person name="Layman D."/>
            <person name="Maas J."/>
            <person name="Jaeger S."/>
            <person name="Walker R."/>
            <person name="Wylie K."/>
            <person name="Sekhon M."/>
            <person name="Becker M.C."/>
            <person name="O'Laughlin M.D."/>
            <person name="Schaller M.E."/>
            <person name="Fewell G.A."/>
            <person name="Delehaunty K.D."/>
            <person name="Miner T.L."/>
            <person name="Nash W.E."/>
            <person name="Cordes M."/>
            <person name="Du H."/>
            <person name="Sun H."/>
            <person name="Edwards J."/>
            <person name="Bradshaw-Cordum H."/>
            <person name="Ali J."/>
            <person name="Andrews S."/>
            <person name="Isak A."/>
            <person name="Vanbrunt A."/>
            <person name="Nguyen C."/>
            <person name="Du F."/>
            <person name="Lamar B."/>
            <person name="Courtney L."/>
            <person name="Kalicki J."/>
            <person name="Ozersky P."/>
            <person name="Bielicki L."/>
            <person name="Scott K."/>
            <person name="Holmes A."/>
            <person name="Harkins R."/>
            <person name="Harris A."/>
            <person name="Strong C.M."/>
            <person name="Hou S."/>
            <person name="Tomlinson C."/>
            <person name="Dauphin-Kohlberg S."/>
            <person name="Kozlowicz-Reilly A."/>
            <person name="Leonard S."/>
            <person name="Rohlfing T."/>
            <person name="Rock S.M."/>
            <person name="Tin-Wollam A.-M."/>
            <person name="Abbott A."/>
            <person name="Minx P."/>
            <person name="Maupin R."/>
            <person name="Strowmatt C."/>
            <person name="Latreille P."/>
            <person name="Miller N."/>
            <person name="Johnson D."/>
            <person name="Murray J."/>
            <person name="Woessner J.P."/>
            <person name="Wendl M.C."/>
            <person name="Yang S.-P."/>
            <person name="Schultz B.R."/>
            <person name="Wallis J.W."/>
            <person name="Spieth J."/>
            <person name="Bieri T.A."/>
            <person name="Nelson J.O."/>
            <person name="Berkowicz N."/>
            <person name="Wohldmann P.E."/>
            <person name="Cook L.L."/>
            <person name="Hickenbotham M.T."/>
            <person name="Eldred J."/>
            <person name="Williams D."/>
            <person name="Bedell J.A."/>
            <person name="Mardis E.R."/>
            <person name="Clifton S.W."/>
            <person name="Chissoe S.L."/>
            <person name="Marra M.A."/>
            <person name="Raymond C."/>
            <person name="Haugen E."/>
            <person name="Gillett W."/>
            <person name="Zhou Y."/>
            <person name="James R."/>
            <person name="Phelps K."/>
            <person name="Iadanoto S."/>
            <person name="Bubb K."/>
            <person name="Simms E."/>
            <person name="Levy R."/>
            <person name="Clendenning J."/>
            <person name="Kaul R."/>
            <person name="Kent W.J."/>
            <person name="Furey T.S."/>
            <person name="Baertsch R.A."/>
            <person name="Brent M.R."/>
            <person name="Keibler E."/>
            <person name="Flicek P."/>
            <person name="Bork P."/>
            <person name="Suyama M."/>
            <person name="Bailey J.A."/>
            <person name="Portnoy M.E."/>
            <person name="Torrents D."/>
            <person name="Chinwalla A.T."/>
            <person name="Gish W.R."/>
            <person name="Eddy S.R."/>
            <person name="McPherson J.D."/>
            <person name="Olson M.V."/>
            <person name="Eichler E.E."/>
            <person name="Green E.D."/>
            <person name="Waterston R.H."/>
            <person name="Wilson R.K."/>
        </authorList>
    </citation>
    <scope>NUCLEOTIDE SEQUENCE [LARGE SCALE GENOMIC DNA]</scope>
</reference>
<reference key="7">
    <citation type="journal article" date="2004" name="Genome Res.">
        <title>The status, quality, and expansion of the NIH full-length cDNA project: the Mammalian Gene Collection (MGC).</title>
        <authorList>
            <consortium name="The MGC Project Team"/>
        </authorList>
    </citation>
    <scope>NUCLEOTIDE SEQUENCE [LARGE SCALE MRNA]</scope>
    <scope>VARIANT THR-496</scope>
    <source>
        <tissue>Brain</tissue>
    </source>
</reference>
<reference key="8">
    <citation type="journal article" date="2006" name="PLoS Biol.">
        <title>Role of the AP2 beta-appendage hub in recruiting partners for clathrin-coated vesicle assembly.</title>
        <authorList>
            <person name="Schmid E.M."/>
            <person name="Ford M.G.J."/>
            <person name="Burtey A."/>
            <person name="Praefcke G.J.K."/>
            <person name="Peak-Chew S.-Y."/>
            <person name="Mills I.G."/>
            <person name="Benmerah A."/>
            <person name="McMahon H.T."/>
        </authorList>
    </citation>
    <scope>INTERACTION WITH AP2B1</scope>
</reference>
<reference key="9">
    <citation type="journal article" date="2010" name="Biochem. Biophys. Res. Commun.">
        <title>Intersectin 1 forms complexes with SGIP1 and Reps1 in clathrin-coated pits.</title>
        <authorList>
            <person name="Dergai O."/>
            <person name="Novokhatska O."/>
            <person name="Dergai M."/>
            <person name="Skrypkina I."/>
            <person name="Tsyba L."/>
            <person name="Moreau J."/>
            <person name="Rynditch A."/>
        </authorList>
    </citation>
    <scope>INTERACTION WITH REPS1 AND SGIP1</scope>
</reference>
<reference key="10">
    <citation type="journal article" date="2002" name="Structure">
        <title>Accessory protein recruitment motifs in clathrin-mediated endocytosis.</title>
        <authorList>
            <person name="Brett T.J."/>
            <person name="Traub L.M."/>
            <person name="Fremont D.H."/>
        </authorList>
    </citation>
    <scope>X-RAY CRYSTALLOGRAPHY (2.15 ANGSTROMS) OF 322-330 IN COMPLEX WITH AP2A2</scope>
</reference>
<gene>
    <name type="primary">AMPH</name>
    <name type="synonym">AMPH1</name>
</gene>
<protein>
    <recommendedName>
        <fullName>Amphiphysin</fullName>
    </recommendedName>
</protein>
<evidence type="ECO:0000250" key="1">
    <source>
        <dbReference type="UniProtKB" id="O08838"/>
    </source>
</evidence>
<evidence type="ECO:0000250" key="2">
    <source>
        <dbReference type="UniProtKB" id="Q7TQF7"/>
    </source>
</evidence>
<evidence type="ECO:0000255" key="3"/>
<evidence type="ECO:0000255" key="4">
    <source>
        <dbReference type="PROSITE-ProRule" id="PRU00192"/>
    </source>
</evidence>
<evidence type="ECO:0000255" key="5">
    <source>
        <dbReference type="PROSITE-ProRule" id="PRU00361"/>
    </source>
</evidence>
<evidence type="ECO:0000256" key="6">
    <source>
        <dbReference type="SAM" id="MobiDB-lite"/>
    </source>
</evidence>
<evidence type="ECO:0000269" key="7">
    <source>
    </source>
</evidence>
<evidence type="ECO:0000269" key="8">
    <source>
    </source>
</evidence>
<evidence type="ECO:0000269" key="9">
    <source>
    </source>
</evidence>
<evidence type="ECO:0000269" key="10">
    <source>
    </source>
</evidence>
<evidence type="ECO:0000303" key="11">
    <source>
    </source>
</evidence>
<evidence type="ECO:0007829" key="12">
    <source>
        <dbReference type="PDB" id="1UTC"/>
    </source>
</evidence>
<evidence type="ECO:0007829" key="13">
    <source>
        <dbReference type="PDB" id="4ATM"/>
    </source>
</evidence>
<accession>P49418</accession>
<accession>A4D1X8</accession>
<accession>A4D1X9</accession>
<accession>O43538</accession>
<accession>Q75MJ8</accession>
<accession>Q75MK5</accession>
<accession>Q75MM3</accession>
<accession>Q8N4G0</accession>
<name>AMPH_HUMAN</name>
<feature type="chain" id="PRO_0000192947" description="Amphiphysin">
    <location>
        <begin position="1"/>
        <end position="695"/>
    </location>
</feature>
<feature type="domain" description="BAR" evidence="5">
    <location>
        <begin position="24"/>
        <end position="240"/>
    </location>
</feature>
<feature type="domain" description="SH3" evidence="4">
    <location>
        <begin position="622"/>
        <end position="695"/>
    </location>
</feature>
<feature type="region of interest" description="Disordered" evidence="6">
    <location>
        <begin position="244"/>
        <end position="312"/>
    </location>
</feature>
<feature type="region of interest" description="Disordered" evidence="6">
    <location>
        <begin position="486"/>
        <end position="617"/>
    </location>
</feature>
<feature type="coiled-coil region" evidence="3">
    <location>
        <begin position="10"/>
        <end position="83"/>
    </location>
</feature>
<feature type="coiled-coil region" evidence="3">
    <location>
        <begin position="144"/>
        <end position="191"/>
    </location>
</feature>
<feature type="compositionally biased region" description="Pro residues" evidence="6">
    <location>
        <begin position="261"/>
        <end position="274"/>
    </location>
</feature>
<feature type="modified residue" description="Phosphoserine" evidence="2">
    <location>
        <position position="252"/>
    </location>
</feature>
<feature type="modified residue" description="Phosphothreonine" evidence="2">
    <location>
        <position position="260"/>
    </location>
</feature>
<feature type="modified residue" description="Phosphoserine" evidence="2">
    <location>
        <position position="262"/>
    </location>
</feature>
<feature type="modified residue" description="Phosphoserine" evidence="2">
    <location>
        <position position="268"/>
    </location>
</feature>
<feature type="modified residue" description="Phosphoserine" evidence="2">
    <location>
        <position position="272"/>
    </location>
</feature>
<feature type="modified residue" description="Phosphoserine" evidence="2">
    <location>
        <position position="276"/>
    </location>
</feature>
<feature type="modified residue" description="Phosphothreonine" evidence="2">
    <location>
        <position position="280"/>
    </location>
</feature>
<feature type="modified residue" description="Phosphoserine" evidence="2">
    <location>
        <position position="506"/>
    </location>
</feature>
<feature type="modified residue" description="Phosphoserine" evidence="2">
    <location>
        <position position="638"/>
    </location>
</feature>
<feature type="splice variant" id="VSP_000245" description="In isoform 2." evidence="11">
    <location>
        <begin position="425"/>
        <end position="466"/>
    </location>
</feature>
<feature type="sequence variant" id="VAR_053004" description="In dbSNP:rs35166354.">
    <original>K</original>
    <variation>E</variation>
    <location>
        <position position="218"/>
    </location>
</feature>
<feature type="sequence variant" id="VAR_053005" description="In dbSNP:rs17171345.">
    <original>M</original>
    <variation>I</variation>
    <location>
        <position position="376"/>
    </location>
</feature>
<feature type="sequence variant" id="VAR_053006" description="In dbSNP:rs35024632." evidence="8">
    <original>K</original>
    <variation>T</variation>
    <location>
        <position position="496"/>
    </location>
</feature>
<feature type="helix" evidence="13">
    <location>
        <begin position="20"/>
        <end position="22"/>
    </location>
</feature>
<feature type="helix" evidence="13">
    <location>
        <begin position="24"/>
        <end position="84"/>
    </location>
</feature>
<feature type="helix" evidence="13">
    <location>
        <begin position="92"/>
        <end position="115"/>
    </location>
</feature>
<feature type="helix" evidence="13">
    <location>
        <begin position="117"/>
        <end position="126"/>
    </location>
</feature>
<feature type="helix" evidence="13">
    <location>
        <begin position="128"/>
        <end position="156"/>
    </location>
</feature>
<feature type="helix" evidence="13">
    <location>
        <begin position="163"/>
        <end position="196"/>
    </location>
</feature>
<feature type="helix" evidence="13">
    <location>
        <begin position="198"/>
        <end position="237"/>
    </location>
</feature>
<feature type="helix" evidence="12">
    <location>
        <begin position="382"/>
        <end position="384"/>
    </location>
</feature>
<proteinExistence type="evidence at protein level"/>
<dbReference type="EMBL" id="U07616">
    <property type="protein sequence ID" value="AAA21865.1"/>
    <property type="molecule type" value="mRNA"/>
</dbReference>
<dbReference type="EMBL" id="X81438">
    <property type="protein sequence ID" value="CAA57197.1"/>
    <property type="molecule type" value="mRNA"/>
</dbReference>
<dbReference type="EMBL" id="AF034996">
    <property type="protein sequence ID" value="AAC02977.1"/>
    <property type="molecule type" value="mRNA"/>
</dbReference>
<dbReference type="EMBL" id="AC011309">
    <property type="protein sequence ID" value="AAS07391.1"/>
    <property type="molecule type" value="Genomic_DNA"/>
</dbReference>
<dbReference type="EMBL" id="AC012490">
    <property type="protein sequence ID" value="AAS07563.1"/>
    <property type="molecule type" value="Genomic_DNA"/>
</dbReference>
<dbReference type="EMBL" id="AC007245">
    <property type="protein sequence ID" value="AAS07541.1"/>
    <property type="molecule type" value="Genomic_DNA"/>
</dbReference>
<dbReference type="EMBL" id="CH236951">
    <property type="protein sequence ID" value="EAL23989.1"/>
    <property type="molecule type" value="Genomic_DNA"/>
</dbReference>
<dbReference type="EMBL" id="CH236951">
    <property type="protein sequence ID" value="EAL23990.1"/>
    <property type="molecule type" value="Genomic_DNA"/>
</dbReference>
<dbReference type="EMBL" id="CH471073">
    <property type="protein sequence ID" value="EAW94110.1"/>
    <property type="molecule type" value="Genomic_DNA"/>
</dbReference>
<dbReference type="EMBL" id="CH471073">
    <property type="protein sequence ID" value="EAW94111.1"/>
    <property type="molecule type" value="Genomic_DNA"/>
</dbReference>
<dbReference type="EMBL" id="BC034376">
    <property type="protein sequence ID" value="AAH34376.1"/>
    <property type="molecule type" value="mRNA"/>
</dbReference>
<dbReference type="CCDS" id="CCDS47574.1">
    <molecule id="P49418-2"/>
</dbReference>
<dbReference type="CCDS" id="CCDS5456.1">
    <molecule id="P49418-1"/>
</dbReference>
<dbReference type="PIR" id="S62400">
    <property type="entry name" value="S62400"/>
</dbReference>
<dbReference type="RefSeq" id="NP_001626.1">
    <molecule id="P49418-1"/>
    <property type="nucleotide sequence ID" value="NM_001635.4"/>
</dbReference>
<dbReference type="RefSeq" id="NP_647477.1">
    <molecule id="P49418-2"/>
    <property type="nucleotide sequence ID" value="NM_139316.3"/>
</dbReference>
<dbReference type="PDB" id="1KY7">
    <property type="method" value="X-ray"/>
    <property type="resolution" value="2.15 A"/>
    <property type="chains" value="P=322-330"/>
</dbReference>
<dbReference type="PDB" id="1UTC">
    <property type="method" value="X-ray"/>
    <property type="resolution" value="2.30 A"/>
    <property type="chains" value="P/Q=379-387"/>
</dbReference>
<dbReference type="PDB" id="3SOG">
    <property type="method" value="X-ray"/>
    <property type="resolution" value="2.30 A"/>
    <property type="chains" value="A=34-236"/>
</dbReference>
<dbReference type="PDB" id="4ATM">
    <property type="method" value="X-ray"/>
    <property type="resolution" value="1.78 A"/>
    <property type="chains" value="A=1-242"/>
</dbReference>
<dbReference type="PDB" id="5M5S">
    <property type="method" value="X-ray"/>
    <property type="resolution" value="1.88 A"/>
    <property type="chains" value="E/F/G/H=349-358"/>
</dbReference>
<dbReference type="PDB" id="5M61">
    <property type="method" value="X-ray"/>
    <property type="resolution" value="1.84 A"/>
    <property type="chains" value="E/F/G/H=349-360"/>
</dbReference>
<dbReference type="PDBsum" id="1KY7"/>
<dbReference type="PDBsum" id="1UTC"/>
<dbReference type="PDBsum" id="3SOG"/>
<dbReference type="PDBsum" id="4ATM"/>
<dbReference type="PDBsum" id="5M5S"/>
<dbReference type="PDBsum" id="5M61"/>
<dbReference type="SMR" id="P49418"/>
<dbReference type="BioGRID" id="106770">
    <property type="interactions" value="60"/>
</dbReference>
<dbReference type="DIP" id="DIP-40729N"/>
<dbReference type="ELM" id="P49418"/>
<dbReference type="FunCoup" id="P49418">
    <property type="interactions" value="1242"/>
</dbReference>
<dbReference type="IntAct" id="P49418">
    <property type="interactions" value="36"/>
</dbReference>
<dbReference type="MINT" id="P49418"/>
<dbReference type="STRING" id="9606.ENSP00000348602"/>
<dbReference type="GlyGen" id="P49418">
    <property type="glycosylation" value="5 sites"/>
</dbReference>
<dbReference type="iPTMnet" id="P49418"/>
<dbReference type="PhosphoSitePlus" id="P49418"/>
<dbReference type="SwissPalm" id="P49418"/>
<dbReference type="BioMuta" id="AMPH"/>
<dbReference type="DMDM" id="1351924"/>
<dbReference type="jPOST" id="P49418"/>
<dbReference type="MassIVE" id="P49418"/>
<dbReference type="PaxDb" id="9606-ENSP00000348602"/>
<dbReference type="PeptideAtlas" id="P49418"/>
<dbReference type="ProteomicsDB" id="56004">
    <molecule id="P49418-1"/>
</dbReference>
<dbReference type="ProteomicsDB" id="56005">
    <molecule id="P49418-2"/>
</dbReference>
<dbReference type="Pumba" id="P49418"/>
<dbReference type="Antibodypedia" id="3258">
    <property type="antibodies" value="479 antibodies from 40 providers"/>
</dbReference>
<dbReference type="DNASU" id="273"/>
<dbReference type="Ensembl" id="ENST00000325590.9">
    <molecule id="P49418-2"/>
    <property type="protein sequence ID" value="ENSP00000317441.5"/>
    <property type="gene ID" value="ENSG00000078053.17"/>
</dbReference>
<dbReference type="Ensembl" id="ENST00000356264.7">
    <molecule id="P49418-1"/>
    <property type="protein sequence ID" value="ENSP00000348602.2"/>
    <property type="gene ID" value="ENSG00000078053.17"/>
</dbReference>
<dbReference type="GeneID" id="273"/>
<dbReference type="KEGG" id="hsa:273"/>
<dbReference type="MANE-Select" id="ENST00000356264.7">
    <property type="protein sequence ID" value="ENSP00000348602.2"/>
    <property type="RefSeq nucleotide sequence ID" value="NM_001635.4"/>
    <property type="RefSeq protein sequence ID" value="NP_001626.1"/>
</dbReference>
<dbReference type="UCSC" id="uc003tgu.4">
    <molecule id="P49418-1"/>
    <property type="organism name" value="human"/>
</dbReference>
<dbReference type="AGR" id="HGNC:471"/>
<dbReference type="CTD" id="273"/>
<dbReference type="DisGeNET" id="273"/>
<dbReference type="GeneCards" id="AMPH"/>
<dbReference type="HGNC" id="HGNC:471">
    <property type="gene designation" value="AMPH"/>
</dbReference>
<dbReference type="HPA" id="ENSG00000078053">
    <property type="expression patterns" value="Group enriched (brain, pituitary gland, retina)"/>
</dbReference>
<dbReference type="MIM" id="600418">
    <property type="type" value="gene"/>
</dbReference>
<dbReference type="neXtProt" id="NX_P49418"/>
<dbReference type="OpenTargets" id="ENSG00000078053"/>
<dbReference type="PharmGKB" id="PA24779"/>
<dbReference type="VEuPathDB" id="HostDB:ENSG00000078053"/>
<dbReference type="eggNOG" id="KOG3771">
    <property type="taxonomic scope" value="Eukaryota"/>
</dbReference>
<dbReference type="GeneTree" id="ENSGT00950000182882"/>
<dbReference type="HOGENOM" id="CLU_017859_4_0_1"/>
<dbReference type="InParanoid" id="P49418"/>
<dbReference type="OMA" id="VKMVGEX"/>
<dbReference type="OrthoDB" id="446293at2759"/>
<dbReference type="PAN-GO" id="P49418">
    <property type="GO annotations" value="4 GO annotations based on evolutionary models"/>
</dbReference>
<dbReference type="PhylomeDB" id="P49418"/>
<dbReference type="TreeFam" id="TF313542"/>
<dbReference type="PathwayCommons" id="P49418"/>
<dbReference type="Reactome" id="R-HSA-8856828">
    <property type="pathway name" value="Clathrin-mediated endocytosis"/>
</dbReference>
<dbReference type="SignaLink" id="P49418"/>
<dbReference type="SIGNOR" id="P49418"/>
<dbReference type="BioGRID-ORCS" id="273">
    <property type="hits" value="8 hits in 1148 CRISPR screens"/>
</dbReference>
<dbReference type="CD-CODE" id="FB4E32DD">
    <property type="entry name" value="Presynaptic clusters and postsynaptic densities"/>
</dbReference>
<dbReference type="ChiTaRS" id="AMPH">
    <property type="organism name" value="human"/>
</dbReference>
<dbReference type="EvolutionaryTrace" id="P49418"/>
<dbReference type="GeneWiki" id="Amphiphysin"/>
<dbReference type="GenomeRNAi" id="273"/>
<dbReference type="Pharos" id="P49418">
    <property type="development level" value="Tbio"/>
</dbReference>
<dbReference type="PRO" id="PR:P49418"/>
<dbReference type="Proteomes" id="UP000005640">
    <property type="component" value="Chromosome 7"/>
</dbReference>
<dbReference type="RNAct" id="P49418">
    <property type="molecule type" value="protein"/>
</dbReference>
<dbReference type="Bgee" id="ENSG00000078053">
    <property type="expression patterns" value="Expressed in middle temporal gyrus and 145 other cell types or tissues"/>
</dbReference>
<dbReference type="ExpressionAtlas" id="P49418">
    <property type="expression patterns" value="baseline and differential"/>
</dbReference>
<dbReference type="GO" id="GO:0015629">
    <property type="term" value="C:actin cytoskeleton"/>
    <property type="evidence" value="ECO:0000304"/>
    <property type="project" value="ProtInc"/>
</dbReference>
<dbReference type="GO" id="GO:0005829">
    <property type="term" value="C:cytosol"/>
    <property type="evidence" value="ECO:0000304"/>
    <property type="project" value="Reactome"/>
</dbReference>
<dbReference type="GO" id="GO:0031256">
    <property type="term" value="C:leading edge membrane"/>
    <property type="evidence" value="ECO:0000314"/>
    <property type="project" value="FlyBase"/>
</dbReference>
<dbReference type="GO" id="GO:0005886">
    <property type="term" value="C:plasma membrane"/>
    <property type="evidence" value="ECO:0000318"/>
    <property type="project" value="GO_Central"/>
</dbReference>
<dbReference type="GO" id="GO:0008021">
    <property type="term" value="C:synaptic vesicle"/>
    <property type="evidence" value="ECO:0000318"/>
    <property type="project" value="GO_Central"/>
</dbReference>
<dbReference type="GO" id="GO:0030672">
    <property type="term" value="C:synaptic vesicle membrane"/>
    <property type="evidence" value="ECO:0007669"/>
    <property type="project" value="UniProtKB-SubCell"/>
</dbReference>
<dbReference type="GO" id="GO:0005543">
    <property type="term" value="F:phospholipid binding"/>
    <property type="evidence" value="ECO:0000314"/>
    <property type="project" value="FlyBase"/>
</dbReference>
<dbReference type="GO" id="GO:0007268">
    <property type="term" value="P:chemical synaptic transmission"/>
    <property type="evidence" value="ECO:0000304"/>
    <property type="project" value="ProtInc"/>
</dbReference>
<dbReference type="GO" id="GO:0006897">
    <property type="term" value="P:endocytosis"/>
    <property type="evidence" value="ECO:0000304"/>
    <property type="project" value="ProtInc"/>
</dbReference>
<dbReference type="GO" id="GO:0048488">
    <property type="term" value="P:synaptic vesicle endocytosis"/>
    <property type="evidence" value="ECO:0000318"/>
    <property type="project" value="GO_Central"/>
</dbReference>
<dbReference type="CDD" id="cd07611">
    <property type="entry name" value="BAR_Amphiphysin_I_II"/>
    <property type="match status" value="1"/>
</dbReference>
<dbReference type="CDD" id="cd12140">
    <property type="entry name" value="SH3_Amphiphysin_I"/>
    <property type="match status" value="1"/>
</dbReference>
<dbReference type="FunFam" id="2.30.30.40:FF:000103">
    <property type="entry name" value="Amphiphysin"/>
    <property type="match status" value="1"/>
</dbReference>
<dbReference type="FunFam" id="1.20.1270.60:FF:000013">
    <property type="entry name" value="Amphiphysin isoform 2"/>
    <property type="match status" value="1"/>
</dbReference>
<dbReference type="Gene3D" id="1.20.1270.60">
    <property type="entry name" value="Arfaptin homology (AH) domain/BAR domain"/>
    <property type="match status" value="1"/>
</dbReference>
<dbReference type="Gene3D" id="2.30.30.40">
    <property type="entry name" value="SH3 Domains"/>
    <property type="match status" value="1"/>
</dbReference>
<dbReference type="InterPro" id="IPR027267">
    <property type="entry name" value="AH/BAR_dom_sf"/>
</dbReference>
<dbReference type="InterPro" id="IPR003005">
    <property type="entry name" value="Amphiphysin"/>
</dbReference>
<dbReference type="InterPro" id="IPR003017">
    <property type="entry name" value="Amphiphysin_1"/>
</dbReference>
<dbReference type="InterPro" id="IPR035470">
    <property type="entry name" value="Amphiphysin_I_SH3"/>
</dbReference>
<dbReference type="InterPro" id="IPR004148">
    <property type="entry name" value="BAR_dom"/>
</dbReference>
<dbReference type="InterPro" id="IPR036028">
    <property type="entry name" value="SH3-like_dom_sf"/>
</dbReference>
<dbReference type="InterPro" id="IPR001452">
    <property type="entry name" value="SH3_domain"/>
</dbReference>
<dbReference type="PANTHER" id="PTHR46514">
    <property type="entry name" value="AMPHIPHYSIN"/>
    <property type="match status" value="1"/>
</dbReference>
<dbReference type="PANTHER" id="PTHR46514:SF2">
    <property type="entry name" value="AMPHIPHYSIN"/>
    <property type="match status" value="1"/>
</dbReference>
<dbReference type="Pfam" id="PF03114">
    <property type="entry name" value="BAR"/>
    <property type="match status" value="1"/>
</dbReference>
<dbReference type="PRINTS" id="PR01251">
    <property type="entry name" value="AMPHIPHYSIN"/>
</dbReference>
<dbReference type="PRINTS" id="PR01252">
    <property type="entry name" value="AMPHIPHYSIN1"/>
</dbReference>
<dbReference type="PRINTS" id="PR00452">
    <property type="entry name" value="SH3DOMAIN"/>
</dbReference>
<dbReference type="SMART" id="SM00721">
    <property type="entry name" value="BAR"/>
    <property type="match status" value="1"/>
</dbReference>
<dbReference type="SMART" id="SM00326">
    <property type="entry name" value="SH3"/>
    <property type="match status" value="1"/>
</dbReference>
<dbReference type="SUPFAM" id="SSF103657">
    <property type="entry name" value="BAR/IMD domain-like"/>
    <property type="match status" value="1"/>
</dbReference>
<dbReference type="SUPFAM" id="SSF50044">
    <property type="entry name" value="SH3-domain"/>
    <property type="match status" value="1"/>
</dbReference>
<dbReference type="PROSITE" id="PS51021">
    <property type="entry name" value="BAR"/>
    <property type="match status" value="1"/>
</dbReference>
<dbReference type="PROSITE" id="PS50002">
    <property type="entry name" value="SH3"/>
    <property type="match status" value="1"/>
</dbReference>
<organism>
    <name type="scientific">Homo sapiens</name>
    <name type="common">Human</name>
    <dbReference type="NCBI Taxonomy" id="9606"/>
    <lineage>
        <taxon>Eukaryota</taxon>
        <taxon>Metazoa</taxon>
        <taxon>Chordata</taxon>
        <taxon>Craniata</taxon>
        <taxon>Vertebrata</taxon>
        <taxon>Euteleostomi</taxon>
        <taxon>Mammalia</taxon>
        <taxon>Eutheria</taxon>
        <taxon>Euarchontoglires</taxon>
        <taxon>Primates</taxon>
        <taxon>Haplorrhini</taxon>
        <taxon>Catarrhini</taxon>
        <taxon>Hominidae</taxon>
        <taxon>Homo</taxon>
    </lineage>
</organism>